<organism>
    <name type="scientific">Staphylococcus aureus (strain NCTC 8325 / PS 47)</name>
    <dbReference type="NCBI Taxonomy" id="93061"/>
    <lineage>
        <taxon>Bacteria</taxon>
        <taxon>Bacillati</taxon>
        <taxon>Bacillota</taxon>
        <taxon>Bacilli</taxon>
        <taxon>Bacillales</taxon>
        <taxon>Staphylococcaceae</taxon>
        <taxon>Staphylococcus</taxon>
    </lineage>
</organism>
<accession>P0A0Q4</accession>
<accession>P52079</accession>
<accession>Q2FZK5</accession>
<feature type="chain" id="PRO_0000215531" description="Uncharacterized protein SAOUHSC_00996">
    <location>
        <begin position="1"/>
        <end position="156"/>
    </location>
</feature>
<protein>
    <recommendedName>
        <fullName>Uncharacterized protein SAOUHSC_00996</fullName>
    </recommendedName>
    <alternativeName>
        <fullName>ORF2</fullName>
    </alternativeName>
</protein>
<name>Y996_STAA8</name>
<reference key="1">
    <citation type="journal article" date="1995" name="Proc. Natl. Acad. Sci. U.S.A.">
        <title>A Staphylococcus aureus autolysin that has an N-acetylmuramoyl-L-alanine amidase domain and an endo-beta-N-acetylglucosaminidase domain: cloning, sequence analysis, and characterization.</title>
        <authorList>
            <person name="Oshida T."/>
            <person name="Sugai M."/>
            <person name="Komatsuzawa H."/>
            <person name="Hong Y.-M."/>
            <person name="Suginaka H."/>
            <person name="Tomasz A."/>
        </authorList>
    </citation>
    <scope>NUCLEOTIDE SEQUENCE [GENOMIC DNA]</scope>
</reference>
<reference key="2">
    <citation type="submission" date="1995-04" db="EMBL/GenBank/DDBJ databases">
        <authorList>
            <person name="Foster S.J."/>
        </authorList>
    </citation>
    <scope>NUCLEOTIDE SEQUENCE [GENOMIC DNA]</scope>
</reference>
<reference key="3">
    <citation type="book" date="2006" name="Gram positive pathogens, 2nd edition">
        <title>The Staphylococcus aureus NCTC 8325 genome.</title>
        <editorList>
            <person name="Fischetti V."/>
            <person name="Novick R."/>
            <person name="Ferretti J."/>
            <person name="Portnoy D."/>
            <person name="Rood J."/>
        </editorList>
        <authorList>
            <person name="Gillaspy A.F."/>
            <person name="Worrell V."/>
            <person name="Orvis J."/>
            <person name="Roe B.A."/>
            <person name="Dyer D.W."/>
            <person name="Iandolo J.J."/>
        </authorList>
    </citation>
    <scope>NUCLEOTIDE SEQUENCE [LARGE SCALE GENOMIC DNA]</scope>
    <source>
        <strain>NCTC 8325 / PS 47</strain>
    </source>
</reference>
<dbReference type="EMBL" id="D17366">
    <property type="protein sequence ID" value="BAA04183.1"/>
    <property type="molecule type" value="Genomic_DNA"/>
</dbReference>
<dbReference type="EMBL" id="L41499">
    <property type="protein sequence ID" value="AAA99980.1"/>
    <property type="molecule type" value="Genomic_DNA"/>
</dbReference>
<dbReference type="EMBL" id="CP000253">
    <property type="protein sequence ID" value="ABD30120.1"/>
    <property type="molecule type" value="Genomic_DNA"/>
</dbReference>
<dbReference type="RefSeq" id="WP_000088431.1">
    <property type="nucleotide sequence ID" value="NZ_LS483365.1"/>
</dbReference>
<dbReference type="RefSeq" id="YP_499548.1">
    <property type="nucleotide sequence ID" value="NC_007795.1"/>
</dbReference>
<dbReference type="SMR" id="P0A0Q4"/>
<dbReference type="STRING" id="93061.SAOUHSC_00996"/>
<dbReference type="PaxDb" id="1280-SAXN108_1052"/>
<dbReference type="GeneID" id="3920396"/>
<dbReference type="KEGG" id="sao:SAOUHSC_00996"/>
<dbReference type="PATRIC" id="fig|93061.5.peg.914"/>
<dbReference type="eggNOG" id="ENOG5032V6N">
    <property type="taxonomic scope" value="Bacteria"/>
</dbReference>
<dbReference type="HOGENOM" id="CLU_1685497_0_0_9"/>
<dbReference type="OrthoDB" id="2389160at2"/>
<dbReference type="PRO" id="PR:P0A0Q4"/>
<dbReference type="Proteomes" id="UP000008816">
    <property type="component" value="Chromosome"/>
</dbReference>
<dbReference type="InterPro" id="IPR024469">
    <property type="entry name" value="DUF2538"/>
</dbReference>
<dbReference type="Pfam" id="PF10804">
    <property type="entry name" value="DUF2538"/>
    <property type="match status" value="1"/>
</dbReference>
<sequence length="156" mass="18268">MSRKTYEKIANINGMFNMLEQQIIHSQDMAHFRSEFFYVNHEHRENYEALLIYYKNSIDNPIVDGACYILALPEIFNSVDVFESELPFSWVYDENGITETMKSLSIPLQYLVAAALEVTDVNIFKPSGFTMGMNNWNIAQMRIFWQYTAIIRKEAL</sequence>
<proteinExistence type="predicted"/>
<keyword id="KW-1185">Reference proteome</keyword>
<gene>
    <name type="ordered locus">SAOUHSC_00996</name>
</gene>